<accession>B8D5U4</accession>
<keyword id="KW-0067">ATP-binding</keyword>
<keyword id="KW-0963">Cytoplasm</keyword>
<keyword id="KW-0418">Kinase</keyword>
<keyword id="KW-0547">Nucleotide-binding</keyword>
<keyword id="KW-0808">Transferase</keyword>
<name>KCY_DESA1</name>
<sequence>MVKIVFSGPPGSGKTTQAKRVAEYYGLKYFSAGSLFREYARRKGVSLEELSRIALEDPSIDLEIDRMTLETVRDSDDIVIDGHLAAWIVSDIVDLKIYVTAPLTLRILRVAGRDNTPLGKALAETLIREYSQRRRFMEYYGIDIYDTSIFDLTINTKLIGVEEAFNIIKSIIDKILKEKHGSMSE</sequence>
<proteinExistence type="inferred from homology"/>
<dbReference type="EC" id="2.7.4.25" evidence="1"/>
<dbReference type="EMBL" id="CP001140">
    <property type="protein sequence ID" value="ACL11475.1"/>
    <property type="molecule type" value="Genomic_DNA"/>
</dbReference>
<dbReference type="RefSeq" id="WP_012608816.1">
    <property type="nucleotide sequence ID" value="NC_011766.1"/>
</dbReference>
<dbReference type="SMR" id="B8D5U4"/>
<dbReference type="STRING" id="490899.DKAM_1149"/>
<dbReference type="GeneID" id="7171240"/>
<dbReference type="KEGG" id="dka:DKAM_1149"/>
<dbReference type="eggNOG" id="arCOG01037">
    <property type="taxonomic scope" value="Archaea"/>
</dbReference>
<dbReference type="HOGENOM" id="CLU_079959_1_0_2"/>
<dbReference type="Proteomes" id="UP000006903">
    <property type="component" value="Chromosome"/>
</dbReference>
<dbReference type="GO" id="GO:0005737">
    <property type="term" value="C:cytoplasm"/>
    <property type="evidence" value="ECO:0007669"/>
    <property type="project" value="UniProtKB-SubCell"/>
</dbReference>
<dbReference type="GO" id="GO:0005524">
    <property type="term" value="F:ATP binding"/>
    <property type="evidence" value="ECO:0007669"/>
    <property type="project" value="UniProtKB-UniRule"/>
</dbReference>
<dbReference type="GO" id="GO:0036430">
    <property type="term" value="F:CMP kinase activity"/>
    <property type="evidence" value="ECO:0007669"/>
    <property type="project" value="RHEA"/>
</dbReference>
<dbReference type="GO" id="GO:0036431">
    <property type="term" value="F:dCMP kinase activity"/>
    <property type="evidence" value="ECO:0007669"/>
    <property type="project" value="RHEA"/>
</dbReference>
<dbReference type="GO" id="GO:0006220">
    <property type="term" value="P:pyrimidine nucleotide metabolic process"/>
    <property type="evidence" value="ECO:0007669"/>
    <property type="project" value="UniProtKB-UniRule"/>
</dbReference>
<dbReference type="CDD" id="cd02020">
    <property type="entry name" value="CMPK"/>
    <property type="match status" value="1"/>
</dbReference>
<dbReference type="Gene3D" id="3.40.50.300">
    <property type="entry name" value="P-loop containing nucleotide triphosphate hydrolases"/>
    <property type="match status" value="1"/>
</dbReference>
<dbReference type="HAMAP" id="MF_00239">
    <property type="entry name" value="Cytidyl_kinase_type2"/>
    <property type="match status" value="1"/>
</dbReference>
<dbReference type="InterPro" id="IPR011892">
    <property type="entry name" value="Cyt_kin_arch"/>
</dbReference>
<dbReference type="InterPro" id="IPR011994">
    <property type="entry name" value="Cytidylate_kinase_dom"/>
</dbReference>
<dbReference type="InterPro" id="IPR027417">
    <property type="entry name" value="P-loop_NTPase"/>
</dbReference>
<dbReference type="NCBIfam" id="TIGR02173">
    <property type="entry name" value="cyt_kin_arch"/>
    <property type="match status" value="1"/>
</dbReference>
<dbReference type="Pfam" id="PF13189">
    <property type="entry name" value="Cytidylate_kin2"/>
    <property type="match status" value="1"/>
</dbReference>
<dbReference type="SUPFAM" id="SSF52540">
    <property type="entry name" value="P-loop containing nucleoside triphosphate hydrolases"/>
    <property type="match status" value="1"/>
</dbReference>
<organism>
    <name type="scientific">Desulfurococcus amylolyticus (strain DSM 18924 / JCM 16383 / VKM B-2413 / 1221n)</name>
    <name type="common">Desulfurococcus kamchatkensis</name>
    <dbReference type="NCBI Taxonomy" id="490899"/>
    <lineage>
        <taxon>Archaea</taxon>
        <taxon>Thermoproteota</taxon>
        <taxon>Thermoprotei</taxon>
        <taxon>Desulfurococcales</taxon>
        <taxon>Desulfurococcaceae</taxon>
        <taxon>Desulfurococcus</taxon>
    </lineage>
</organism>
<gene>
    <name evidence="1" type="primary">cmk</name>
    <name type="ordered locus">DKAM_1149</name>
</gene>
<evidence type="ECO:0000255" key="1">
    <source>
        <dbReference type="HAMAP-Rule" id="MF_00239"/>
    </source>
</evidence>
<comment type="catalytic activity">
    <reaction evidence="1">
        <text>CMP + ATP = CDP + ADP</text>
        <dbReference type="Rhea" id="RHEA:11600"/>
        <dbReference type="ChEBI" id="CHEBI:30616"/>
        <dbReference type="ChEBI" id="CHEBI:58069"/>
        <dbReference type="ChEBI" id="CHEBI:60377"/>
        <dbReference type="ChEBI" id="CHEBI:456216"/>
        <dbReference type="EC" id="2.7.4.25"/>
    </reaction>
</comment>
<comment type="catalytic activity">
    <reaction evidence="1">
        <text>dCMP + ATP = dCDP + ADP</text>
        <dbReference type="Rhea" id="RHEA:25094"/>
        <dbReference type="ChEBI" id="CHEBI:30616"/>
        <dbReference type="ChEBI" id="CHEBI:57566"/>
        <dbReference type="ChEBI" id="CHEBI:58593"/>
        <dbReference type="ChEBI" id="CHEBI:456216"/>
        <dbReference type="EC" id="2.7.4.25"/>
    </reaction>
</comment>
<comment type="subcellular location">
    <subcellularLocation>
        <location evidence="1">Cytoplasm</location>
    </subcellularLocation>
</comment>
<comment type="similarity">
    <text evidence="1">Belongs to the cytidylate kinase family. Type 2 subfamily.</text>
</comment>
<protein>
    <recommendedName>
        <fullName evidence="1">Cytidylate kinase</fullName>
        <shortName evidence="1">CK</shortName>
        <ecNumber evidence="1">2.7.4.25</ecNumber>
    </recommendedName>
    <alternativeName>
        <fullName evidence="1">Cytidine monophosphate kinase</fullName>
        <shortName evidence="1">CMP kinase</shortName>
    </alternativeName>
</protein>
<reference key="1">
    <citation type="journal article" date="2009" name="J. Bacteriol.">
        <title>Complete genome sequence of the anaerobic, protein-degrading hyperthermophilic crenarchaeon Desulfurococcus kamchatkensis.</title>
        <authorList>
            <person name="Ravin N.V."/>
            <person name="Mardanov A.V."/>
            <person name="Beletsky A.V."/>
            <person name="Kublanov I.V."/>
            <person name="Kolganova T.V."/>
            <person name="Lebedinsky A.V."/>
            <person name="Chernyh N.A."/>
            <person name="Bonch-Osmolovskaya E.A."/>
            <person name="Skryabin K.G."/>
        </authorList>
    </citation>
    <scope>NUCLEOTIDE SEQUENCE [LARGE SCALE GENOMIC DNA]</scope>
    <source>
        <strain>DSM 18924 / JCM 16383 / VKM B-2413 / 1221n</strain>
    </source>
</reference>
<feature type="chain" id="PRO_1000125310" description="Cytidylate kinase">
    <location>
        <begin position="1"/>
        <end position="185"/>
    </location>
</feature>
<feature type="binding site" evidence="1">
    <location>
        <begin position="8"/>
        <end position="16"/>
    </location>
    <ligand>
        <name>ATP</name>
        <dbReference type="ChEBI" id="CHEBI:30616"/>
    </ligand>
</feature>